<accession>A4TSD5</accession>
<dbReference type="EMBL" id="CP000668">
    <property type="protein sequence ID" value="ABP42197.1"/>
    <property type="molecule type" value="Genomic_DNA"/>
</dbReference>
<dbReference type="RefSeq" id="WP_002208990.1">
    <property type="nucleotide sequence ID" value="NZ_CP009715.1"/>
</dbReference>
<dbReference type="SMR" id="A4TSD5"/>
<dbReference type="GeneID" id="96663532"/>
<dbReference type="KEGG" id="ypp:YPDSF_3854"/>
<dbReference type="PATRIC" id="fig|386656.14.peg.664"/>
<dbReference type="GO" id="GO:0022625">
    <property type="term" value="C:cytosolic large ribosomal subunit"/>
    <property type="evidence" value="ECO:0007669"/>
    <property type="project" value="TreeGrafter"/>
</dbReference>
<dbReference type="GO" id="GO:0003735">
    <property type="term" value="F:structural constituent of ribosome"/>
    <property type="evidence" value="ECO:0007669"/>
    <property type="project" value="InterPro"/>
</dbReference>
<dbReference type="GO" id="GO:0006412">
    <property type="term" value="P:translation"/>
    <property type="evidence" value="ECO:0007669"/>
    <property type="project" value="UniProtKB-UniRule"/>
</dbReference>
<dbReference type="FunFam" id="2.20.28.120:FF:000001">
    <property type="entry name" value="50S ribosomal protein L33"/>
    <property type="match status" value="1"/>
</dbReference>
<dbReference type="Gene3D" id="2.20.28.120">
    <property type="entry name" value="Ribosomal protein L33"/>
    <property type="match status" value="1"/>
</dbReference>
<dbReference type="HAMAP" id="MF_00294">
    <property type="entry name" value="Ribosomal_bL33"/>
    <property type="match status" value="1"/>
</dbReference>
<dbReference type="InterPro" id="IPR001705">
    <property type="entry name" value="Ribosomal_bL33"/>
</dbReference>
<dbReference type="InterPro" id="IPR018264">
    <property type="entry name" value="Ribosomal_bL33_CS"/>
</dbReference>
<dbReference type="InterPro" id="IPR038584">
    <property type="entry name" value="Ribosomal_bL33_sf"/>
</dbReference>
<dbReference type="InterPro" id="IPR011332">
    <property type="entry name" value="Ribosomal_zn-bd"/>
</dbReference>
<dbReference type="NCBIfam" id="NF001860">
    <property type="entry name" value="PRK00595.1"/>
    <property type="match status" value="1"/>
</dbReference>
<dbReference type="NCBIfam" id="TIGR01023">
    <property type="entry name" value="rpmG_bact"/>
    <property type="match status" value="1"/>
</dbReference>
<dbReference type="PANTHER" id="PTHR15238">
    <property type="entry name" value="54S RIBOSOMAL PROTEIN L39, MITOCHONDRIAL"/>
    <property type="match status" value="1"/>
</dbReference>
<dbReference type="PANTHER" id="PTHR15238:SF1">
    <property type="entry name" value="LARGE RIBOSOMAL SUBUNIT PROTEIN BL33M"/>
    <property type="match status" value="1"/>
</dbReference>
<dbReference type="Pfam" id="PF00471">
    <property type="entry name" value="Ribosomal_L33"/>
    <property type="match status" value="1"/>
</dbReference>
<dbReference type="SUPFAM" id="SSF57829">
    <property type="entry name" value="Zn-binding ribosomal proteins"/>
    <property type="match status" value="1"/>
</dbReference>
<dbReference type="PROSITE" id="PS00582">
    <property type="entry name" value="RIBOSOMAL_L33"/>
    <property type="match status" value="1"/>
</dbReference>
<protein>
    <recommendedName>
        <fullName evidence="1">Large ribosomal subunit protein bL33</fullName>
    </recommendedName>
    <alternativeName>
        <fullName evidence="2">50S ribosomal protein L33</fullName>
    </alternativeName>
</protein>
<gene>
    <name evidence="1" type="primary">rpmG</name>
    <name type="ordered locus">YPDSF_3854</name>
</gene>
<comment type="similarity">
    <text evidence="1">Belongs to the bacterial ribosomal protein bL33 family.</text>
</comment>
<keyword id="KW-0687">Ribonucleoprotein</keyword>
<keyword id="KW-0689">Ribosomal protein</keyword>
<organism>
    <name type="scientific">Yersinia pestis (strain Pestoides F)</name>
    <dbReference type="NCBI Taxonomy" id="386656"/>
    <lineage>
        <taxon>Bacteria</taxon>
        <taxon>Pseudomonadati</taxon>
        <taxon>Pseudomonadota</taxon>
        <taxon>Gammaproteobacteria</taxon>
        <taxon>Enterobacterales</taxon>
        <taxon>Yersiniaceae</taxon>
        <taxon>Yersinia</taxon>
    </lineage>
</organism>
<evidence type="ECO:0000255" key="1">
    <source>
        <dbReference type="HAMAP-Rule" id="MF_00294"/>
    </source>
</evidence>
<evidence type="ECO:0000305" key="2"/>
<reference key="1">
    <citation type="submission" date="2007-02" db="EMBL/GenBank/DDBJ databases">
        <title>Complete sequence of chromosome of Yersinia pestis Pestoides F.</title>
        <authorList>
            <consortium name="US DOE Joint Genome Institute"/>
            <person name="Copeland A."/>
            <person name="Lucas S."/>
            <person name="Lapidus A."/>
            <person name="Barry K."/>
            <person name="Detter J.C."/>
            <person name="Glavina del Rio T."/>
            <person name="Hammon N."/>
            <person name="Israni S."/>
            <person name="Dalin E."/>
            <person name="Tice H."/>
            <person name="Pitluck S."/>
            <person name="Di Bartolo G."/>
            <person name="Chain P."/>
            <person name="Malfatti S."/>
            <person name="Shin M."/>
            <person name="Vergez L."/>
            <person name="Schmutz J."/>
            <person name="Larimer F."/>
            <person name="Land M."/>
            <person name="Hauser L."/>
            <person name="Worsham P."/>
            <person name="Chu M."/>
            <person name="Bearden S."/>
            <person name="Garcia E."/>
            <person name="Richardson P."/>
        </authorList>
    </citation>
    <scope>NUCLEOTIDE SEQUENCE [LARGE SCALE GENOMIC DNA]</scope>
    <source>
        <strain>Pestoides F</strain>
    </source>
</reference>
<name>RL33_YERPP</name>
<sequence length="55" mass="6358">MAKGVREKIKLVSSAGTGHFYTTTKNKRTKPEKLELKKFDPVVRQHVLYKEAKIK</sequence>
<feature type="chain" id="PRO_1000004221" description="Large ribosomal subunit protein bL33">
    <location>
        <begin position="1"/>
        <end position="55"/>
    </location>
</feature>
<proteinExistence type="inferred from homology"/>